<proteinExistence type="evidence at protein level"/>
<protein>
    <recommendedName>
        <fullName>Probable small nuclear ribonucleoprotein E</fullName>
        <shortName>snRNP-E</shortName>
    </recommendedName>
    <alternativeName>
        <fullName>Sm protein E</fullName>
        <shortName>Sm-E</shortName>
        <shortName>SmE</shortName>
    </alternativeName>
</protein>
<accession>Q9XTU6</accession>
<keyword id="KW-0002">3D-structure</keyword>
<keyword id="KW-0963">Cytoplasm</keyword>
<keyword id="KW-0507">mRNA processing</keyword>
<keyword id="KW-0508">mRNA splicing</keyword>
<keyword id="KW-0539">Nucleus</keyword>
<keyword id="KW-1185">Reference proteome</keyword>
<keyword id="KW-0687">Ribonucleoprotein</keyword>
<keyword id="KW-0694">RNA-binding</keyword>
<keyword id="KW-0747">Spliceosome</keyword>
<name>RUXE_CAEEL</name>
<evidence type="ECO:0000250" key="1">
    <source>
        <dbReference type="UniProtKB" id="P62304"/>
    </source>
</evidence>
<evidence type="ECO:0000255" key="2">
    <source>
        <dbReference type="PROSITE-ProRule" id="PRU01346"/>
    </source>
</evidence>
<evidence type="ECO:0000305" key="3"/>
<evidence type="ECO:0000312" key="4">
    <source>
        <dbReference type="EMBL" id="CAB11551.1"/>
    </source>
</evidence>
<reference key="1">
    <citation type="journal article" date="1998" name="Science">
        <title>Genome sequence of the nematode C. elegans: a platform for investigating biology.</title>
        <authorList>
            <consortium name="The C. elegans sequencing consortium"/>
        </authorList>
    </citation>
    <scope>NUCLEOTIDE SEQUENCE [LARGE SCALE GENOMIC DNA]</scope>
    <source>
        <strain>Bristol N2</strain>
    </source>
</reference>
<feature type="chain" id="PRO_0000125533" description="Probable small nuclear ribonucleoprotein E">
    <location>
        <begin position="1"/>
        <end position="90"/>
    </location>
</feature>
<feature type="domain" description="Sm" evidence="2">
    <location>
        <begin position="14"/>
        <end position="89"/>
    </location>
</feature>
<sequence>MSTRKLNKVMVQPVNLIFRYLQNRTRVQIWLYEDVTHRLEGYIIGFDEFMNVVFDEAEEVNMKTKGRNKIGRILLKGDNITLIHAAQQEA</sequence>
<dbReference type="EMBL" id="Z98866">
    <property type="protein sequence ID" value="CAB11551.1"/>
    <property type="molecule type" value="Genomic_DNA"/>
</dbReference>
<dbReference type="PIR" id="T27041">
    <property type="entry name" value="T27041"/>
</dbReference>
<dbReference type="RefSeq" id="NP_499620.1">
    <property type="nucleotide sequence ID" value="NM_067219.4"/>
</dbReference>
<dbReference type="PDB" id="8RO0">
    <property type="method" value="EM"/>
    <property type="resolution" value="2.90 A"/>
    <property type="chains" value="e/l=1-90"/>
</dbReference>
<dbReference type="PDB" id="8RO1">
    <property type="method" value="EM"/>
    <property type="resolution" value="3.00 A"/>
    <property type="chains" value="e/l=1-90"/>
</dbReference>
<dbReference type="PDBsum" id="8RO0"/>
<dbReference type="PDBsum" id="8RO1"/>
<dbReference type="EMDB" id="EMD-19397"/>
<dbReference type="EMDB" id="EMD-19398"/>
<dbReference type="SMR" id="Q9XTU6"/>
<dbReference type="BioGRID" id="41847">
    <property type="interactions" value="38"/>
</dbReference>
<dbReference type="DIP" id="DIP-24866N"/>
<dbReference type="FunCoup" id="Q9XTU6">
    <property type="interactions" value="2435"/>
</dbReference>
<dbReference type="IntAct" id="Q9XTU6">
    <property type="interactions" value="4"/>
</dbReference>
<dbReference type="STRING" id="6239.Y49E10.15.1"/>
<dbReference type="PaxDb" id="6239-Y49E10.15"/>
<dbReference type="PeptideAtlas" id="Q9XTU6"/>
<dbReference type="EnsemblMetazoa" id="Y49E10.15.1">
    <property type="protein sequence ID" value="Y49E10.15.1"/>
    <property type="gene ID" value="WBGene00004919"/>
</dbReference>
<dbReference type="GeneID" id="176668"/>
<dbReference type="KEGG" id="cel:CELE_Y49E10.15"/>
<dbReference type="UCSC" id="Y49E10.15">
    <property type="organism name" value="c. elegans"/>
</dbReference>
<dbReference type="AGR" id="WB:WBGene00004919"/>
<dbReference type="CTD" id="176668"/>
<dbReference type="WormBase" id="Y49E10.15">
    <property type="protein sequence ID" value="CE22230"/>
    <property type="gene ID" value="WBGene00004919"/>
    <property type="gene designation" value="snr-6"/>
</dbReference>
<dbReference type="eggNOG" id="KOG1774">
    <property type="taxonomic scope" value="Eukaryota"/>
</dbReference>
<dbReference type="GeneTree" id="ENSGT00390000012818"/>
<dbReference type="HOGENOM" id="CLU_125186_1_0_1"/>
<dbReference type="InParanoid" id="Q9XTU6"/>
<dbReference type="OMA" id="VPPINCI"/>
<dbReference type="OrthoDB" id="25620at2759"/>
<dbReference type="PhylomeDB" id="Q9XTU6"/>
<dbReference type="Reactome" id="R-CEL-111367">
    <property type="pathway name" value="SLBP independent Processing of Histone Pre-mRNAs"/>
</dbReference>
<dbReference type="Reactome" id="R-CEL-191859">
    <property type="pathway name" value="snRNP Assembly"/>
</dbReference>
<dbReference type="Reactome" id="R-CEL-72163">
    <property type="pathway name" value="mRNA Splicing - Major Pathway"/>
</dbReference>
<dbReference type="Reactome" id="R-CEL-72165">
    <property type="pathway name" value="mRNA Splicing - Minor Pathway"/>
</dbReference>
<dbReference type="Reactome" id="R-CEL-73856">
    <property type="pathway name" value="RNA Polymerase II Transcription Termination"/>
</dbReference>
<dbReference type="Reactome" id="R-CEL-77588">
    <property type="pathway name" value="SLBP Dependent Processing of Replication-Dependent Histone Pre-mRNAs"/>
</dbReference>
<dbReference type="PRO" id="PR:Q9XTU6"/>
<dbReference type="Proteomes" id="UP000001940">
    <property type="component" value="Chromosome III"/>
</dbReference>
<dbReference type="Bgee" id="WBGene00004919">
    <property type="expression patterns" value="Expressed in embryo and 4 other cell types or tissues"/>
</dbReference>
<dbReference type="GO" id="GO:0005829">
    <property type="term" value="C:cytosol"/>
    <property type="evidence" value="ECO:0007669"/>
    <property type="project" value="UniProtKB-SubCell"/>
</dbReference>
<dbReference type="GO" id="GO:0043186">
    <property type="term" value="C:P granule"/>
    <property type="evidence" value="ECO:0000314"/>
    <property type="project" value="WormBase"/>
</dbReference>
<dbReference type="GO" id="GO:0034715">
    <property type="term" value="C:pICln-Sm protein complex"/>
    <property type="evidence" value="ECO:0000318"/>
    <property type="project" value="GO_Central"/>
</dbReference>
<dbReference type="GO" id="GO:0071011">
    <property type="term" value="C:precatalytic spliceosome"/>
    <property type="evidence" value="ECO:0000318"/>
    <property type="project" value="GO_Central"/>
</dbReference>
<dbReference type="GO" id="GO:0005685">
    <property type="term" value="C:U1 snRNP"/>
    <property type="evidence" value="ECO:0000318"/>
    <property type="project" value="GO_Central"/>
</dbReference>
<dbReference type="GO" id="GO:0005686">
    <property type="term" value="C:U2 snRNP"/>
    <property type="evidence" value="ECO:0000318"/>
    <property type="project" value="GO_Central"/>
</dbReference>
<dbReference type="GO" id="GO:0005687">
    <property type="term" value="C:U4 snRNP"/>
    <property type="evidence" value="ECO:0000318"/>
    <property type="project" value="GO_Central"/>
</dbReference>
<dbReference type="GO" id="GO:0046540">
    <property type="term" value="C:U4/U6 x U5 tri-snRNP complex"/>
    <property type="evidence" value="ECO:0000318"/>
    <property type="project" value="GO_Central"/>
</dbReference>
<dbReference type="GO" id="GO:0005682">
    <property type="term" value="C:U5 snRNP"/>
    <property type="evidence" value="ECO:0000318"/>
    <property type="project" value="GO_Central"/>
</dbReference>
<dbReference type="GO" id="GO:0003723">
    <property type="term" value="F:RNA binding"/>
    <property type="evidence" value="ECO:0007669"/>
    <property type="project" value="UniProtKB-KW"/>
</dbReference>
<dbReference type="GO" id="GO:0000387">
    <property type="term" value="P:spliceosomal snRNP assembly"/>
    <property type="evidence" value="ECO:0000318"/>
    <property type="project" value="GO_Central"/>
</dbReference>
<dbReference type="CDD" id="cd01718">
    <property type="entry name" value="Sm_E"/>
    <property type="match status" value="1"/>
</dbReference>
<dbReference type="FunFam" id="2.30.30.100:FF:000013">
    <property type="entry name" value="Small nuclear ribonucleoprotein E"/>
    <property type="match status" value="1"/>
</dbReference>
<dbReference type="Gene3D" id="2.30.30.100">
    <property type="match status" value="1"/>
</dbReference>
<dbReference type="InterPro" id="IPR010920">
    <property type="entry name" value="LSM_dom_sf"/>
</dbReference>
<dbReference type="InterPro" id="IPR047575">
    <property type="entry name" value="Sm"/>
</dbReference>
<dbReference type="InterPro" id="IPR001163">
    <property type="entry name" value="Sm_dom_euk/arc"/>
</dbReference>
<dbReference type="InterPro" id="IPR027078">
    <property type="entry name" value="snRNP-E"/>
</dbReference>
<dbReference type="PANTHER" id="PTHR11193">
    <property type="entry name" value="SMALL NUCLEAR RIBONUCLEOPROTEIN E"/>
    <property type="match status" value="1"/>
</dbReference>
<dbReference type="Pfam" id="PF01423">
    <property type="entry name" value="LSM"/>
    <property type="match status" value="1"/>
</dbReference>
<dbReference type="SMART" id="SM00651">
    <property type="entry name" value="Sm"/>
    <property type="match status" value="1"/>
</dbReference>
<dbReference type="SUPFAM" id="SSF50182">
    <property type="entry name" value="Sm-like ribonucleoproteins"/>
    <property type="match status" value="1"/>
</dbReference>
<dbReference type="PROSITE" id="PS52002">
    <property type="entry name" value="SM"/>
    <property type="match status" value="1"/>
</dbReference>
<gene>
    <name type="primary">snr-6</name>
    <name type="ORF">Y49E10.15</name>
</gene>
<organism evidence="4">
    <name type="scientific">Caenorhabditis elegans</name>
    <dbReference type="NCBI Taxonomy" id="6239"/>
    <lineage>
        <taxon>Eukaryota</taxon>
        <taxon>Metazoa</taxon>
        <taxon>Ecdysozoa</taxon>
        <taxon>Nematoda</taxon>
        <taxon>Chromadorea</taxon>
        <taxon>Rhabditida</taxon>
        <taxon>Rhabditina</taxon>
        <taxon>Rhabditomorpha</taxon>
        <taxon>Rhabditoidea</taxon>
        <taxon>Rhabditidae</taxon>
        <taxon>Peloderinae</taxon>
        <taxon>Caenorhabditis</taxon>
    </lineage>
</organism>
<comment type="function">
    <text evidence="1">Plays a role in pre-mRNA splicing as a core component of the spliceosomal U1, U2, U4 and U5 small nuclear ribonucleoproteins (snRNPs), the building blocks of the spliceosome.</text>
</comment>
<comment type="subunit">
    <text evidence="1">Core component of the spliceosomal U1, U2, U4 and U5 small nuclear ribonucleoproteins (snRNPs), the building blocks of the spliceosome.</text>
</comment>
<comment type="subcellular location">
    <subcellularLocation>
        <location evidence="1">Nucleus</location>
    </subcellularLocation>
    <subcellularLocation>
        <location evidence="1">Cytoplasm</location>
        <location evidence="1">Cytosol</location>
    </subcellularLocation>
</comment>
<comment type="similarity">
    <text evidence="3">Belongs to the snRNP Sm proteins family.</text>
</comment>